<name>NS1AB_TASV2</name>
<gene>
    <name type="primary">ORF1</name>
</gene>
<accession>Q9ILI5</accession>
<reference key="1">
    <citation type="journal article" date="2000" name="J. Virol.">
        <title>Molecular characterization of an avian astrovirus.</title>
        <authorList>
            <person name="Koci M.D."/>
            <person name="Seal B.S."/>
            <person name="Schultz-Cherry S."/>
        </authorList>
    </citation>
    <scope>NUCLEOTIDE SEQUENCE [GENOMIC RNA]</scope>
</reference>
<proteinExistence type="inferred from homology"/>
<organism>
    <name type="scientific">Turkey astrovirus 2</name>
    <name type="common">TAstV-2</name>
    <dbReference type="NCBI Taxonomy" id="246343"/>
    <lineage>
        <taxon>Viruses</taxon>
        <taxon>Riboviria</taxon>
        <taxon>Orthornavirae</taxon>
        <taxon>Pisuviricota</taxon>
        <taxon>Stelpaviricetes</taxon>
        <taxon>Stellavirales</taxon>
        <taxon>Astroviridae</taxon>
        <taxon>Avastrovirus</taxon>
        <taxon>Avastrovirus 3</taxon>
    </lineage>
</organism>
<keyword id="KW-0067">ATP-binding</keyword>
<keyword id="KW-0175">Coiled coil</keyword>
<keyword id="KW-0191">Covalent protein-RNA linkage</keyword>
<keyword id="KW-1043">Host membrane</keyword>
<keyword id="KW-0378">Hydrolase</keyword>
<keyword id="KW-0472">Membrane</keyword>
<keyword id="KW-0547">Nucleotide-binding</keyword>
<keyword id="KW-0548">Nucleotidyltransferase</keyword>
<keyword id="KW-0597">Phosphoprotein</keyword>
<keyword id="KW-0645">Protease</keyword>
<keyword id="KW-0688">Ribosomal frameshifting</keyword>
<keyword id="KW-0696">RNA-directed RNA polymerase</keyword>
<keyword id="KW-0720">Serine protease</keyword>
<keyword id="KW-0808">Transferase</keyword>
<keyword id="KW-0812">Transmembrane</keyword>
<keyword id="KW-1133">Transmembrane helix</keyword>
<keyword id="KW-0693">Viral RNA replication</keyword>
<comment type="function">
    <molecule>Serine protease p27</molecule>
    <text evidence="2">Responsible for the cleavage of the polyprotein into functional products.</text>
</comment>
<comment type="function">
    <molecule>Viral genome-linked protein</molecule>
    <text evidence="3">Protein covalently attached to the 5' extremity of the genomic and subgenomic RNAs (By similarity). It may serve as a primer for the replicase (By similarity).</text>
</comment>
<comment type="catalytic activity">
    <reaction evidence="5">
        <text>RNA(n) + a ribonucleoside 5'-triphosphate = RNA(n+1) + diphosphate</text>
        <dbReference type="Rhea" id="RHEA:21248"/>
        <dbReference type="Rhea" id="RHEA-COMP:14527"/>
        <dbReference type="Rhea" id="RHEA-COMP:17342"/>
        <dbReference type="ChEBI" id="CHEBI:33019"/>
        <dbReference type="ChEBI" id="CHEBI:61557"/>
        <dbReference type="ChEBI" id="CHEBI:140395"/>
        <dbReference type="EC" id="2.7.7.48"/>
    </reaction>
</comment>
<comment type="subunit">
    <molecule>Serine protease p27</molecule>
    <text evidence="2">Monomer.</text>
</comment>
<comment type="subcellular location">
    <molecule>Transmembrane protein 1A</molecule>
    <subcellularLocation>
        <location evidence="6">Host membrane</location>
        <topology evidence="6">Multi-pass membrane protein</topology>
    </subcellularLocation>
</comment>
<comment type="alternative products">
    <event type="ribosomal frameshifting"/>
    <isoform>
        <id>Q9ILI5-1</id>
        <name>nsp1ab</name>
        <sequence type="displayed"/>
    </isoform>
    <isoform>
        <id>Q9ILI6-1</id>
        <name>nsp1a</name>
        <sequence type="external"/>
    </isoform>
</comment>
<comment type="PTM">
    <text evidence="2">Cleaved by the viral and host proteases (By similarity). The protease is probably autocatalytically cleaved (By similarity).</text>
</comment>
<comment type="miscellaneous">
    <molecule>Isoform nsp1ab</molecule>
    <text>Generated by a ribosomal frameshift at position 1125.</text>
</comment>
<comment type="similarity">
    <text evidence="6">Belongs to the astroviridae polyprotein 1AB family.</text>
</comment>
<feature type="chain" id="PRO_0000327313" description="Non-structural polyprotein 1AB">
    <location>
        <begin position="1"/>
        <end position="1638"/>
    </location>
</feature>
<feature type="chain" id="PRO_0000327314" description="Protein p19" evidence="4">
    <location>
        <begin position="1"/>
        <end position="170"/>
    </location>
</feature>
<feature type="chain" id="PRO_0000327315" description="Transmembrane protein 1A" evidence="4">
    <location>
        <begin position="171"/>
        <end position="552"/>
    </location>
</feature>
<feature type="chain" id="PRO_0000327316" description="Serine protease p27" evidence="4">
    <location>
        <begin position="553"/>
        <end position="797"/>
    </location>
</feature>
<feature type="chain" id="PRO_0000419593" description="Viral genome-linked protein" evidence="4">
    <location>
        <begin position="798"/>
        <end position="916"/>
    </location>
</feature>
<feature type="chain" id="PRO_0000327317" description="Protein p20" evidence="4">
    <location>
        <begin position="917"/>
        <end position="1051"/>
    </location>
</feature>
<feature type="chain" id="PRO_0000327318" description="RNA-directed RNA polymerase p57" evidence="4">
    <location>
        <begin position="1052"/>
        <end position="1638"/>
    </location>
</feature>
<feature type="transmembrane region" description="Helical" evidence="4">
    <location>
        <begin position="220"/>
        <end position="240"/>
    </location>
</feature>
<feature type="transmembrane region" description="Helical" evidence="4">
    <location>
        <begin position="379"/>
        <end position="398"/>
    </location>
</feature>
<feature type="transmembrane region" description="Helical" evidence="4">
    <location>
        <begin position="407"/>
        <end position="427"/>
    </location>
</feature>
<feature type="transmembrane region" description="Helical" evidence="4">
    <location>
        <begin position="437"/>
        <end position="457"/>
    </location>
</feature>
<feature type="transmembrane region" description="Helical" evidence="4">
    <location>
        <begin position="479"/>
        <end position="499"/>
    </location>
</feature>
<feature type="transmembrane region" description="Helical" evidence="4">
    <location>
        <begin position="507"/>
        <end position="527"/>
    </location>
</feature>
<feature type="domain" description="RdRp catalytic" evidence="5">
    <location>
        <begin position="1381"/>
        <end position="1515"/>
    </location>
</feature>
<feature type="coiled-coil region" evidence="4">
    <location>
        <begin position="130"/>
        <end position="222"/>
    </location>
</feature>
<feature type="coiled-coil region" evidence="4">
    <location>
        <begin position="758"/>
        <end position="788"/>
    </location>
</feature>
<feature type="active site" description="Charge relay system; for serine protease activity" evidence="1">
    <location>
        <position position="600"/>
    </location>
</feature>
<feature type="active site" description="Charge relay system; for serine protease activity" evidence="1">
    <location>
        <position position="632"/>
    </location>
</feature>
<feature type="active site" description="Charge relay system; for serine protease activity" evidence="1">
    <location>
        <position position="697"/>
    </location>
</feature>
<feature type="site" description="Cleavage" evidence="4">
    <location>
        <begin position="170"/>
        <end position="171"/>
    </location>
</feature>
<feature type="site" description="Cleavage" evidence="4">
    <location>
        <begin position="552"/>
        <end position="553"/>
    </location>
</feature>
<feature type="site" description="Cleavage" evidence="4">
    <location>
        <begin position="797"/>
        <end position="798"/>
    </location>
</feature>
<feature type="site" description="Cleavage" evidence="4">
    <location>
        <begin position="916"/>
        <end position="917"/>
    </location>
</feature>
<feature type="site" description="Cleavage" evidence="4">
    <location>
        <begin position="1051"/>
        <end position="1052"/>
    </location>
</feature>
<feature type="modified residue" description="O-(5'-phospho-RNA)-tyrosine" evidence="3">
    <location>
        <position position="834"/>
    </location>
</feature>
<evidence type="ECO:0000250" key="1"/>
<evidence type="ECO:0000250" key="2">
    <source>
        <dbReference type="UniProtKB" id="P0C6K4"/>
    </source>
</evidence>
<evidence type="ECO:0000250" key="3">
    <source>
        <dbReference type="UniProtKB" id="Q3ZN07"/>
    </source>
</evidence>
<evidence type="ECO:0000255" key="4"/>
<evidence type="ECO:0000255" key="5">
    <source>
        <dbReference type="PROSITE-ProRule" id="PRU00539"/>
    </source>
</evidence>
<evidence type="ECO:0000305" key="6"/>
<dbReference type="EC" id="3.4.21.-" evidence="2"/>
<dbReference type="EC" id="2.7.7.48"/>
<dbReference type="EMBL" id="AF206663">
    <property type="protein sequence ID" value="AAF60952.1"/>
    <property type="status" value="ALT_SEQ"/>
    <property type="molecule type" value="Genomic_RNA"/>
</dbReference>
<dbReference type="Proteomes" id="UP000007235">
    <property type="component" value="Segment"/>
</dbReference>
<dbReference type="GO" id="GO:0033644">
    <property type="term" value="C:host cell membrane"/>
    <property type="evidence" value="ECO:0007669"/>
    <property type="project" value="UniProtKB-SubCell"/>
</dbReference>
<dbReference type="GO" id="GO:0016020">
    <property type="term" value="C:membrane"/>
    <property type="evidence" value="ECO:0007669"/>
    <property type="project" value="UniProtKB-KW"/>
</dbReference>
<dbReference type="GO" id="GO:0005524">
    <property type="term" value="F:ATP binding"/>
    <property type="evidence" value="ECO:0007669"/>
    <property type="project" value="UniProtKB-KW"/>
</dbReference>
<dbReference type="GO" id="GO:0003723">
    <property type="term" value="F:RNA binding"/>
    <property type="evidence" value="ECO:0007669"/>
    <property type="project" value="InterPro"/>
</dbReference>
<dbReference type="GO" id="GO:0003968">
    <property type="term" value="F:RNA-directed RNA polymerase activity"/>
    <property type="evidence" value="ECO:0007669"/>
    <property type="project" value="UniProtKB-KW"/>
</dbReference>
<dbReference type="GO" id="GO:0008236">
    <property type="term" value="F:serine-type peptidase activity"/>
    <property type="evidence" value="ECO:0007669"/>
    <property type="project" value="UniProtKB-KW"/>
</dbReference>
<dbReference type="GO" id="GO:0006351">
    <property type="term" value="P:DNA-templated transcription"/>
    <property type="evidence" value="ECO:0007669"/>
    <property type="project" value="InterPro"/>
</dbReference>
<dbReference type="GO" id="GO:0006508">
    <property type="term" value="P:proteolysis"/>
    <property type="evidence" value="ECO:0007669"/>
    <property type="project" value="UniProtKB-KW"/>
</dbReference>
<dbReference type="GO" id="GO:0039694">
    <property type="term" value="P:viral RNA genome replication"/>
    <property type="evidence" value="ECO:0007669"/>
    <property type="project" value="InterPro"/>
</dbReference>
<dbReference type="GO" id="GO:0075523">
    <property type="term" value="P:viral translational frameshifting"/>
    <property type="evidence" value="ECO:0007669"/>
    <property type="project" value="UniProtKB-KW"/>
</dbReference>
<dbReference type="CDD" id="cd23172">
    <property type="entry name" value="ps-ssRNAv_Astroviridae_RdRp"/>
    <property type="match status" value="1"/>
</dbReference>
<dbReference type="Gene3D" id="3.30.70.270">
    <property type="match status" value="1"/>
</dbReference>
<dbReference type="Gene3D" id="2.40.10.10">
    <property type="entry name" value="Trypsin-like serine proteases"/>
    <property type="match status" value="2"/>
</dbReference>
<dbReference type="InterPro" id="IPR045836">
    <property type="entry name" value="Astro_VPg"/>
</dbReference>
<dbReference type="InterPro" id="IPR043502">
    <property type="entry name" value="DNA/RNA_pol_sf"/>
</dbReference>
<dbReference type="InterPro" id="IPR009003">
    <property type="entry name" value="Peptidase_S1_PA"/>
</dbReference>
<dbReference type="InterPro" id="IPR043504">
    <property type="entry name" value="Peptidase_S1_PA_chymotrypsin"/>
</dbReference>
<dbReference type="InterPro" id="IPR043128">
    <property type="entry name" value="Rev_trsase/Diguanyl_cyclase"/>
</dbReference>
<dbReference type="InterPro" id="IPR001205">
    <property type="entry name" value="RNA-dir_pol_C"/>
</dbReference>
<dbReference type="InterPro" id="IPR007094">
    <property type="entry name" value="RNA-dir_pol_PSvirus"/>
</dbReference>
<dbReference type="Pfam" id="PF19416">
    <property type="entry name" value="Astro_VPg"/>
    <property type="match status" value="1"/>
</dbReference>
<dbReference type="Pfam" id="PF00680">
    <property type="entry name" value="RdRP_1"/>
    <property type="match status" value="1"/>
</dbReference>
<dbReference type="Pfam" id="PF13365">
    <property type="entry name" value="Trypsin_2"/>
    <property type="match status" value="1"/>
</dbReference>
<dbReference type="SUPFAM" id="SSF56672">
    <property type="entry name" value="DNA/RNA polymerases"/>
    <property type="match status" value="1"/>
</dbReference>
<dbReference type="SUPFAM" id="SSF50494">
    <property type="entry name" value="Trypsin-like serine proteases"/>
    <property type="match status" value="1"/>
</dbReference>
<dbReference type="PROSITE" id="PS50507">
    <property type="entry name" value="RDRP_SSRNA_POS"/>
    <property type="match status" value="1"/>
</dbReference>
<protein>
    <recommendedName>
        <fullName>Non-structural polyprotein 1AB</fullName>
    </recommendedName>
    <component>
        <recommendedName>
            <fullName>Protein p19</fullName>
        </recommendedName>
    </component>
    <component>
        <recommendedName>
            <fullName>Transmembrane protein 1A</fullName>
        </recommendedName>
    </component>
    <component>
        <recommendedName>
            <fullName>Serine protease p27</fullName>
            <shortName>p27</shortName>
            <ecNumber evidence="2">3.4.21.-</ecNumber>
        </recommendedName>
    </component>
    <component>
        <recommendedName>
            <fullName>Viral genome-linked protein</fullName>
        </recommendedName>
        <alternativeName>
            <fullName>VPg</fullName>
        </alternativeName>
    </component>
    <component>
        <recommendedName>
            <fullName>Protein p20</fullName>
        </recommendedName>
    </component>
    <component>
        <recommendedName>
            <fullName>RNA-directed RNA polymerase p57</fullName>
            <shortName>p57</shortName>
            <ecNumber>2.7.7.48</ecNumber>
        </recommendedName>
    </component>
</protein>
<sequence length="1638" mass="187664">MAQAGRSGDAFASLDQRRERQEEQAQSGLDKVFYFQGVVELFNRMKIAYGRTPAWTALMKCNAIYLKDFKTAVGVEGTRYGLFFAEEVTKPTWSPDIGANLITLGEKACLDAQNAKYERLQASLKTTSGLVHQVMEKTREAKENLEKANKIQEQLDKVIESNKALHRKIQERNREKMQEYMVRLHNTQKDRDDWVQRCSRLEQENVTLQKRLKEKENALVSVGWDLLGWIVISVLVFGLISLADAQNLTPPAKIVITPGQAEFMDLAKLEKIQVRKYRLDSCELPPEKGCVLYKDYLTTRPVSFLELMAKCSKPDWVSESSYNETTLMEECIQIFGAEWCEGKLVDLVPRKCGEQHVLVNIIEQIEKTREVVTLIYGKVMSYRLDMWITSIFSLVLAGNKEKLFKMAPFIFVAWFLNIPVFLTCVAVNIFPVVSLPFILFQIFMPQFVLVNAFLLWLTLTLTAFYWSEGPKILMEISYALVYTIGFVLWSLGLAVGVTLKLTMVHQILMFCVVAAAICGTKFACTTITVQHPDGTTAKYTRVGKLKNNVVNQCKKVVTTLQTRGVIPATPAKTASIVIVEGKNGTGVGFRFMNYILTAEHVVQGSDIATLKNGSVSVKSKVIKTIPIFESVDNVAVLKLPPELNSVKPIKLAKKVQSDYLTLTAYDPNFQHAATFTGWCIIDGNWLNNSFDTKFGNSGAPYCDHDGRLVGIHLGTQGVLSQGIVIVDALKNTFQLADQCRPQNFDMDEFLEKVIAGTKVSHAAILKELEELREEVQFLKKKCVTYDDYWLCQTIFGQAKGKTKKTVRGRKHLVTKRALGKGHFMKMRMLTDEEYQNMIEKGFSAEEIREAVNALREQAWLNYCIDNDVDDEGEEDWYDDMVETDRVNQEIDEAIERAMEDRGEFYQKKSRLTFVEQAMMHLIQVSKERSQTAKLEVQKENEAQLVKMFERCVTDENTPEGTTSIAALSTEDDVRLVEGKVIDFTKAKNIPVDGEIRREIIPGTKCTEISTGPENKKNILKKKDTHIAEGKVETKSSQQPVDVKDDKPVALEQRKPRACKWCGSSQKHDYRECRFQREKRFCVYCAAMHSMFEGHIRPIECTSCKKSFSGIEKLEDHVVSGECQKKLIEGPVTTKAPTPVPDWLKIFAWEDDILPPEGKTALPENVTLIGHIPVDKLVSRTKKVQDPLLGLVTPWKQDMYDSTTWTVKAYTKMFEKFHYHDPVDFVEQYAEFVLLCDNMVLREHDYMANSNITPIMSTEKNVNSTPAYPKFQAYDSEAEYLEDCGWQEYLDVVSDPETINRRPLWWCFLKNEVLKREKIEDSDIRMILCTDPIFTRIGAMFEQDQNNRMKQQTEIRSAQVGWTPFFGGLDRRVRRLYGDGDRYFVEMDWTRYDGTIPKSLFWRIRQIRFFFLHDSHKTPKMRRLYNWYVKNLLEKIILLPTGEVCQVKKGNPSGQFSTTVDNNMINVWLTTFEVSYLFFKQRGRLPTEKELQENCSMICYGDDRLLSIRKGFVEYEPDTVIDMYKNIFGMWVKRNNIKIQDTPEGLSFCGLTIVKSSTGAYVGVPNVNKILSTLENPVRRLPDVESLWGKLVSLRILCENAPSNVKHFLDEQISNVEEFAARENIQLPEVGPDFYSRIW</sequence>
<organismHost>
    <name type="scientific">Meleagris gallopavo</name>
    <name type="common">Wild turkey</name>
    <dbReference type="NCBI Taxonomy" id="9103"/>
</organismHost>